<accession>P0ABD6</accession>
<accession>P30867</accession>
<evidence type="ECO:0000250" key="1"/>
<evidence type="ECO:0000255" key="2">
    <source>
        <dbReference type="HAMAP-Rule" id="MF_00823"/>
    </source>
</evidence>
<evidence type="ECO:0000255" key="3">
    <source>
        <dbReference type="PROSITE-ProRule" id="PRU01137"/>
    </source>
</evidence>
<gene>
    <name evidence="2" type="primary">accA</name>
    <name type="ordered locus">Z0197</name>
    <name type="ordered locus">ECs0187</name>
</gene>
<protein>
    <recommendedName>
        <fullName evidence="2">Acetyl-coenzyme A carboxylase carboxyl transferase subunit alpha</fullName>
        <shortName evidence="2">ACCase subunit alpha</shortName>
        <shortName evidence="2">Acetyl-CoA carboxylase carboxyltransferase subunit alpha</shortName>
        <ecNumber evidence="2">2.1.3.15</ecNumber>
    </recommendedName>
</protein>
<dbReference type="EC" id="2.1.3.15" evidence="2"/>
<dbReference type="EMBL" id="AE005174">
    <property type="protein sequence ID" value="AAG54487.1"/>
    <property type="molecule type" value="Genomic_DNA"/>
</dbReference>
<dbReference type="EMBL" id="BA000007">
    <property type="protein sequence ID" value="BAB33610.1"/>
    <property type="molecule type" value="Genomic_DNA"/>
</dbReference>
<dbReference type="PIR" id="C85503">
    <property type="entry name" value="C85503"/>
</dbReference>
<dbReference type="PIR" id="C90652">
    <property type="entry name" value="C90652"/>
</dbReference>
<dbReference type="RefSeq" id="NP_308214.1">
    <property type="nucleotide sequence ID" value="NC_002695.1"/>
</dbReference>
<dbReference type="RefSeq" id="WP_000055741.1">
    <property type="nucleotide sequence ID" value="NZ_VOAI01000002.1"/>
</dbReference>
<dbReference type="SMR" id="P0ABD6"/>
<dbReference type="STRING" id="155864.Z0197"/>
<dbReference type="GeneID" id="86945115"/>
<dbReference type="GeneID" id="913907"/>
<dbReference type="KEGG" id="ece:Z0197"/>
<dbReference type="KEGG" id="ecs:ECs_0187"/>
<dbReference type="PATRIC" id="fig|386585.9.peg.290"/>
<dbReference type="eggNOG" id="COG0825">
    <property type="taxonomic scope" value="Bacteria"/>
</dbReference>
<dbReference type="HOGENOM" id="CLU_015486_0_2_6"/>
<dbReference type="OMA" id="RNFGMAN"/>
<dbReference type="UniPathway" id="UPA00655">
    <property type="reaction ID" value="UER00711"/>
</dbReference>
<dbReference type="Proteomes" id="UP000000558">
    <property type="component" value="Chromosome"/>
</dbReference>
<dbReference type="Proteomes" id="UP000002519">
    <property type="component" value="Chromosome"/>
</dbReference>
<dbReference type="GO" id="GO:0009317">
    <property type="term" value="C:acetyl-CoA carboxylase complex"/>
    <property type="evidence" value="ECO:0007669"/>
    <property type="project" value="InterPro"/>
</dbReference>
<dbReference type="GO" id="GO:0003989">
    <property type="term" value="F:acetyl-CoA carboxylase activity"/>
    <property type="evidence" value="ECO:0007669"/>
    <property type="project" value="InterPro"/>
</dbReference>
<dbReference type="GO" id="GO:0005524">
    <property type="term" value="F:ATP binding"/>
    <property type="evidence" value="ECO:0007669"/>
    <property type="project" value="UniProtKB-KW"/>
</dbReference>
<dbReference type="GO" id="GO:0016743">
    <property type="term" value="F:carboxyl- or carbamoyltransferase activity"/>
    <property type="evidence" value="ECO:0007669"/>
    <property type="project" value="UniProtKB-UniRule"/>
</dbReference>
<dbReference type="GO" id="GO:0006633">
    <property type="term" value="P:fatty acid biosynthetic process"/>
    <property type="evidence" value="ECO:0007669"/>
    <property type="project" value="UniProtKB-KW"/>
</dbReference>
<dbReference type="GO" id="GO:2001295">
    <property type="term" value="P:malonyl-CoA biosynthetic process"/>
    <property type="evidence" value="ECO:0007669"/>
    <property type="project" value="UniProtKB-UniRule"/>
</dbReference>
<dbReference type="FunFam" id="3.90.226.10:FF:000008">
    <property type="entry name" value="Acetyl-coenzyme A carboxylase carboxyl transferase subunit alpha"/>
    <property type="match status" value="1"/>
</dbReference>
<dbReference type="Gene3D" id="3.90.226.10">
    <property type="entry name" value="2-enoyl-CoA Hydratase, Chain A, domain 1"/>
    <property type="match status" value="1"/>
</dbReference>
<dbReference type="HAMAP" id="MF_00823">
    <property type="entry name" value="AcetylCoA_CT_alpha"/>
    <property type="match status" value="1"/>
</dbReference>
<dbReference type="InterPro" id="IPR001095">
    <property type="entry name" value="Acetyl_CoA_COase_a_su"/>
</dbReference>
<dbReference type="InterPro" id="IPR029045">
    <property type="entry name" value="ClpP/crotonase-like_dom_sf"/>
</dbReference>
<dbReference type="InterPro" id="IPR011763">
    <property type="entry name" value="COA_CT_C"/>
</dbReference>
<dbReference type="NCBIfam" id="TIGR00513">
    <property type="entry name" value="accA"/>
    <property type="match status" value="1"/>
</dbReference>
<dbReference type="NCBIfam" id="NF041504">
    <property type="entry name" value="AccA_sub"/>
    <property type="match status" value="1"/>
</dbReference>
<dbReference type="NCBIfam" id="NF004344">
    <property type="entry name" value="PRK05724.1"/>
    <property type="match status" value="1"/>
</dbReference>
<dbReference type="PANTHER" id="PTHR42853">
    <property type="entry name" value="ACETYL-COENZYME A CARBOXYLASE CARBOXYL TRANSFERASE SUBUNIT ALPHA"/>
    <property type="match status" value="1"/>
</dbReference>
<dbReference type="PANTHER" id="PTHR42853:SF3">
    <property type="entry name" value="ACETYL-COENZYME A CARBOXYLASE CARBOXYL TRANSFERASE SUBUNIT ALPHA, CHLOROPLASTIC"/>
    <property type="match status" value="1"/>
</dbReference>
<dbReference type="Pfam" id="PF03255">
    <property type="entry name" value="ACCA"/>
    <property type="match status" value="1"/>
</dbReference>
<dbReference type="PRINTS" id="PR01069">
    <property type="entry name" value="ACCCTRFRASEA"/>
</dbReference>
<dbReference type="SUPFAM" id="SSF52096">
    <property type="entry name" value="ClpP/crotonase"/>
    <property type="match status" value="1"/>
</dbReference>
<dbReference type="PROSITE" id="PS50989">
    <property type="entry name" value="COA_CT_CTER"/>
    <property type="match status" value="1"/>
</dbReference>
<name>ACCA_ECO57</name>
<comment type="function">
    <text evidence="2">Component of the acetyl coenzyme A carboxylase (ACC) complex. First, biotin carboxylase catalyzes the carboxylation of biotin on its carrier protein (BCCP) and then the CO(2) group is transferred by the carboxyltransferase to acetyl-CoA to form malonyl-CoA.</text>
</comment>
<comment type="catalytic activity">
    <reaction evidence="2">
        <text>N(6)-carboxybiotinyl-L-lysyl-[protein] + acetyl-CoA = N(6)-biotinyl-L-lysyl-[protein] + malonyl-CoA</text>
        <dbReference type="Rhea" id="RHEA:54728"/>
        <dbReference type="Rhea" id="RHEA-COMP:10505"/>
        <dbReference type="Rhea" id="RHEA-COMP:10506"/>
        <dbReference type="ChEBI" id="CHEBI:57288"/>
        <dbReference type="ChEBI" id="CHEBI:57384"/>
        <dbReference type="ChEBI" id="CHEBI:83144"/>
        <dbReference type="ChEBI" id="CHEBI:83145"/>
        <dbReference type="EC" id="2.1.3.15"/>
    </reaction>
</comment>
<comment type="pathway">
    <text evidence="2">Lipid metabolism; malonyl-CoA biosynthesis; malonyl-CoA from acetyl-CoA: step 1/1.</text>
</comment>
<comment type="subunit">
    <text evidence="2">Acetyl-CoA carboxylase is a heterohexamer composed of biotin carboxyl carrier protein (AccB), biotin carboxylase (AccC) and two subunits each of ACCase subunit alpha (AccA) and ACCase subunit beta (AccD).</text>
</comment>
<comment type="subcellular location">
    <subcellularLocation>
        <location evidence="2">Cytoplasm</location>
    </subcellularLocation>
</comment>
<comment type="similarity">
    <text evidence="2">Belongs to the AccA family.</text>
</comment>
<sequence>MSLNFLDFEQPIAELEAKIDSLTAVSRQDEKLDINIDEEVHRLREKSVELTRKIFADLGAWQIAQLARHPQRPYTLDYVRLAFDEFDELAGDRAYADDKAIVGGIARLDGRPVMIIGHQKGRETKEKIRRNFGMPAPEGYRKALRLMQMAERFKMPIITFIDTPGAYPGVGAEERGQSEAIARNLREMSRLGVPVVCTVIGEGGSGGALAIGVGDKVNMLQYSTYSVISPEGCASILWKSADKAPLAAEAMGIIAPRLKELKLIDSIIPEPLGGAHRNPEAMAASLKAQLLADLADLDVLSTEDLKNRRYQRLMSYGYA</sequence>
<feature type="initiator methionine" description="Removed" evidence="1">
    <location>
        <position position="1"/>
    </location>
</feature>
<feature type="chain" id="PRO_0000146775" description="Acetyl-coenzyme A carboxylase carboxyl transferase subunit alpha">
    <location>
        <begin position="2"/>
        <end position="319"/>
    </location>
</feature>
<feature type="domain" description="CoA carboxyltransferase C-terminal" evidence="3">
    <location>
        <begin position="35"/>
        <end position="296"/>
    </location>
</feature>
<organism>
    <name type="scientific">Escherichia coli O157:H7</name>
    <dbReference type="NCBI Taxonomy" id="83334"/>
    <lineage>
        <taxon>Bacteria</taxon>
        <taxon>Pseudomonadati</taxon>
        <taxon>Pseudomonadota</taxon>
        <taxon>Gammaproteobacteria</taxon>
        <taxon>Enterobacterales</taxon>
        <taxon>Enterobacteriaceae</taxon>
        <taxon>Escherichia</taxon>
    </lineage>
</organism>
<reference key="1">
    <citation type="journal article" date="2001" name="Nature">
        <title>Genome sequence of enterohaemorrhagic Escherichia coli O157:H7.</title>
        <authorList>
            <person name="Perna N.T."/>
            <person name="Plunkett G. III"/>
            <person name="Burland V."/>
            <person name="Mau B."/>
            <person name="Glasner J.D."/>
            <person name="Rose D.J."/>
            <person name="Mayhew G.F."/>
            <person name="Evans P.S."/>
            <person name="Gregor J."/>
            <person name="Kirkpatrick H.A."/>
            <person name="Posfai G."/>
            <person name="Hackett J."/>
            <person name="Klink S."/>
            <person name="Boutin A."/>
            <person name="Shao Y."/>
            <person name="Miller L."/>
            <person name="Grotbeck E.J."/>
            <person name="Davis N.W."/>
            <person name="Lim A."/>
            <person name="Dimalanta E.T."/>
            <person name="Potamousis K."/>
            <person name="Apodaca J."/>
            <person name="Anantharaman T.S."/>
            <person name="Lin J."/>
            <person name="Yen G."/>
            <person name="Schwartz D.C."/>
            <person name="Welch R.A."/>
            <person name="Blattner F.R."/>
        </authorList>
    </citation>
    <scope>NUCLEOTIDE SEQUENCE [LARGE SCALE GENOMIC DNA]</scope>
    <source>
        <strain>O157:H7 / EDL933 / ATCC 700927 / EHEC</strain>
    </source>
</reference>
<reference key="2">
    <citation type="journal article" date="2001" name="DNA Res.">
        <title>Complete genome sequence of enterohemorrhagic Escherichia coli O157:H7 and genomic comparison with a laboratory strain K-12.</title>
        <authorList>
            <person name="Hayashi T."/>
            <person name="Makino K."/>
            <person name="Ohnishi M."/>
            <person name="Kurokawa K."/>
            <person name="Ishii K."/>
            <person name="Yokoyama K."/>
            <person name="Han C.-G."/>
            <person name="Ohtsubo E."/>
            <person name="Nakayama K."/>
            <person name="Murata T."/>
            <person name="Tanaka M."/>
            <person name="Tobe T."/>
            <person name="Iida T."/>
            <person name="Takami H."/>
            <person name="Honda T."/>
            <person name="Sasakawa C."/>
            <person name="Ogasawara N."/>
            <person name="Yasunaga T."/>
            <person name="Kuhara S."/>
            <person name="Shiba T."/>
            <person name="Hattori M."/>
            <person name="Shinagawa H."/>
        </authorList>
    </citation>
    <scope>NUCLEOTIDE SEQUENCE [LARGE SCALE GENOMIC DNA]</scope>
    <source>
        <strain>O157:H7 / Sakai / RIMD 0509952 / EHEC</strain>
    </source>
</reference>
<proteinExistence type="inferred from homology"/>
<keyword id="KW-0067">ATP-binding</keyword>
<keyword id="KW-0963">Cytoplasm</keyword>
<keyword id="KW-0275">Fatty acid biosynthesis</keyword>
<keyword id="KW-0276">Fatty acid metabolism</keyword>
<keyword id="KW-0444">Lipid biosynthesis</keyword>
<keyword id="KW-0443">Lipid metabolism</keyword>
<keyword id="KW-0547">Nucleotide-binding</keyword>
<keyword id="KW-1185">Reference proteome</keyword>
<keyword id="KW-0808">Transferase</keyword>